<comment type="function">
    <text evidence="1">Catalyzes the irreversible NADPH-dependent deamination of GMP to IMP. It functions in the conversion of nucleobase, nucleoside and nucleotide derivatives of G to A nucleotides, and in maintaining the intracellular balance of A and G nucleotides.</text>
</comment>
<comment type="catalytic activity">
    <reaction evidence="1">
        <text>IMP + NH4(+) + NADP(+) = GMP + NADPH + 2 H(+)</text>
        <dbReference type="Rhea" id="RHEA:17185"/>
        <dbReference type="ChEBI" id="CHEBI:15378"/>
        <dbReference type="ChEBI" id="CHEBI:28938"/>
        <dbReference type="ChEBI" id="CHEBI:57783"/>
        <dbReference type="ChEBI" id="CHEBI:58053"/>
        <dbReference type="ChEBI" id="CHEBI:58115"/>
        <dbReference type="ChEBI" id="CHEBI:58349"/>
        <dbReference type="EC" id="1.7.1.7"/>
    </reaction>
</comment>
<comment type="subunit">
    <text evidence="1">Homotetramer.</text>
</comment>
<comment type="similarity">
    <text evidence="1">Belongs to the IMPDH/GMPR family. GuaC type 1 subfamily.</text>
</comment>
<proteinExistence type="inferred from homology"/>
<reference key="1">
    <citation type="journal article" date="2005" name="Nucleic Acids Res.">
        <title>Genome dynamics and diversity of Shigella species, the etiologic agents of bacillary dysentery.</title>
        <authorList>
            <person name="Yang F."/>
            <person name="Yang J."/>
            <person name="Zhang X."/>
            <person name="Chen L."/>
            <person name="Jiang Y."/>
            <person name="Yan Y."/>
            <person name="Tang X."/>
            <person name="Wang J."/>
            <person name="Xiong Z."/>
            <person name="Dong J."/>
            <person name="Xue Y."/>
            <person name="Zhu Y."/>
            <person name="Xu X."/>
            <person name="Sun L."/>
            <person name="Chen S."/>
            <person name="Nie H."/>
            <person name="Peng J."/>
            <person name="Xu J."/>
            <person name="Wang Y."/>
            <person name="Yuan Z."/>
            <person name="Wen Y."/>
            <person name="Yao Z."/>
            <person name="Shen Y."/>
            <person name="Qiang B."/>
            <person name="Hou Y."/>
            <person name="Yu J."/>
            <person name="Jin Q."/>
        </authorList>
    </citation>
    <scope>NUCLEOTIDE SEQUENCE [LARGE SCALE GENOMIC DNA]</scope>
    <source>
        <strain>Sb227</strain>
    </source>
</reference>
<protein>
    <recommendedName>
        <fullName evidence="1">GMP reductase</fullName>
        <ecNumber evidence="1">1.7.1.7</ecNumber>
    </recommendedName>
    <alternativeName>
        <fullName evidence="1">Guanosine 5'-monophosphate oxidoreductase</fullName>
        <shortName evidence="1">Guanosine monophosphate reductase</shortName>
    </alternativeName>
</protein>
<accession>Q326D1</accession>
<gene>
    <name evidence="1" type="primary">guaC</name>
    <name type="ordered locus">SBO_0092</name>
</gene>
<name>GUAC_SHIBS</name>
<feature type="chain" id="PRO_1000025618" description="GMP reductase">
    <location>
        <begin position="1"/>
        <end position="347"/>
    </location>
</feature>
<feature type="active site" description="Thioimidate intermediate" evidence="1">
    <location>
        <position position="186"/>
    </location>
</feature>
<feature type="binding site" evidence="1">
    <location>
        <begin position="108"/>
        <end position="131"/>
    </location>
    <ligand>
        <name>NADP(+)</name>
        <dbReference type="ChEBI" id="CHEBI:58349"/>
    </ligand>
</feature>
<feature type="binding site" evidence="1">
    <location>
        <position position="181"/>
    </location>
    <ligand>
        <name>K(+)</name>
        <dbReference type="ChEBI" id="CHEBI:29103"/>
    </ligand>
</feature>
<feature type="binding site" evidence="1">
    <location>
        <position position="183"/>
    </location>
    <ligand>
        <name>K(+)</name>
        <dbReference type="ChEBI" id="CHEBI:29103"/>
    </ligand>
</feature>
<feature type="binding site" evidence="1">
    <location>
        <begin position="216"/>
        <end position="239"/>
    </location>
    <ligand>
        <name>NADP(+)</name>
        <dbReference type="ChEBI" id="CHEBI:58349"/>
    </ligand>
</feature>
<organism>
    <name type="scientific">Shigella boydii serotype 4 (strain Sb227)</name>
    <dbReference type="NCBI Taxonomy" id="300268"/>
    <lineage>
        <taxon>Bacteria</taxon>
        <taxon>Pseudomonadati</taxon>
        <taxon>Pseudomonadota</taxon>
        <taxon>Gammaproteobacteria</taxon>
        <taxon>Enterobacterales</taxon>
        <taxon>Enterobacteriaceae</taxon>
        <taxon>Shigella</taxon>
    </lineage>
</organism>
<dbReference type="EC" id="1.7.1.7" evidence="1"/>
<dbReference type="EMBL" id="CP000036">
    <property type="protein sequence ID" value="ABB64827.1"/>
    <property type="molecule type" value="Genomic_DNA"/>
</dbReference>
<dbReference type="RefSeq" id="WP_001217317.1">
    <property type="nucleotide sequence ID" value="NC_007613.1"/>
</dbReference>
<dbReference type="SMR" id="Q326D1"/>
<dbReference type="KEGG" id="sbo:SBO_0092"/>
<dbReference type="HOGENOM" id="CLU_022552_5_3_6"/>
<dbReference type="Proteomes" id="UP000007067">
    <property type="component" value="Chromosome"/>
</dbReference>
<dbReference type="GO" id="GO:0005829">
    <property type="term" value="C:cytosol"/>
    <property type="evidence" value="ECO:0007669"/>
    <property type="project" value="TreeGrafter"/>
</dbReference>
<dbReference type="GO" id="GO:1902560">
    <property type="term" value="C:GMP reductase complex"/>
    <property type="evidence" value="ECO:0007669"/>
    <property type="project" value="InterPro"/>
</dbReference>
<dbReference type="GO" id="GO:0003920">
    <property type="term" value="F:GMP reductase activity"/>
    <property type="evidence" value="ECO:0007669"/>
    <property type="project" value="UniProtKB-UniRule"/>
</dbReference>
<dbReference type="GO" id="GO:0046872">
    <property type="term" value="F:metal ion binding"/>
    <property type="evidence" value="ECO:0007669"/>
    <property type="project" value="UniProtKB-KW"/>
</dbReference>
<dbReference type="GO" id="GO:0006163">
    <property type="term" value="P:purine nucleotide metabolic process"/>
    <property type="evidence" value="ECO:0007669"/>
    <property type="project" value="UniProtKB-UniRule"/>
</dbReference>
<dbReference type="CDD" id="cd00381">
    <property type="entry name" value="IMPDH"/>
    <property type="match status" value="1"/>
</dbReference>
<dbReference type="FunFam" id="3.20.20.70:FF:000012">
    <property type="entry name" value="GMP reductase"/>
    <property type="match status" value="1"/>
</dbReference>
<dbReference type="Gene3D" id="3.20.20.70">
    <property type="entry name" value="Aldolase class I"/>
    <property type="match status" value="1"/>
</dbReference>
<dbReference type="HAMAP" id="MF_00596">
    <property type="entry name" value="GMP_reduct_type1"/>
    <property type="match status" value="1"/>
</dbReference>
<dbReference type="InterPro" id="IPR013785">
    <property type="entry name" value="Aldolase_TIM"/>
</dbReference>
<dbReference type="InterPro" id="IPR050139">
    <property type="entry name" value="GMP_reductase"/>
</dbReference>
<dbReference type="InterPro" id="IPR005993">
    <property type="entry name" value="GMPR"/>
</dbReference>
<dbReference type="InterPro" id="IPR015875">
    <property type="entry name" value="IMP_DH/GMP_Rdtase_CS"/>
</dbReference>
<dbReference type="InterPro" id="IPR001093">
    <property type="entry name" value="IMP_DH_GMPRt"/>
</dbReference>
<dbReference type="NCBIfam" id="TIGR01305">
    <property type="entry name" value="GMP_reduct_1"/>
    <property type="match status" value="1"/>
</dbReference>
<dbReference type="NCBIfam" id="NF003470">
    <property type="entry name" value="PRK05096.1"/>
    <property type="match status" value="1"/>
</dbReference>
<dbReference type="PANTHER" id="PTHR43170">
    <property type="entry name" value="GMP REDUCTASE"/>
    <property type="match status" value="1"/>
</dbReference>
<dbReference type="PANTHER" id="PTHR43170:SF5">
    <property type="entry name" value="GMP REDUCTASE"/>
    <property type="match status" value="1"/>
</dbReference>
<dbReference type="Pfam" id="PF00478">
    <property type="entry name" value="IMPDH"/>
    <property type="match status" value="1"/>
</dbReference>
<dbReference type="PIRSF" id="PIRSF000235">
    <property type="entry name" value="GMP_reductase"/>
    <property type="match status" value="1"/>
</dbReference>
<dbReference type="SMART" id="SM01240">
    <property type="entry name" value="IMPDH"/>
    <property type="match status" value="1"/>
</dbReference>
<dbReference type="SUPFAM" id="SSF51412">
    <property type="entry name" value="Inosine monophosphate dehydrogenase (IMPDH)"/>
    <property type="match status" value="1"/>
</dbReference>
<dbReference type="PROSITE" id="PS00487">
    <property type="entry name" value="IMP_DH_GMP_RED"/>
    <property type="match status" value="1"/>
</dbReference>
<sequence length="347" mass="37442">MRIEEDLKLGFKDVLIRPKRSTLKSRSDVELERQFTFKHSDQSWSGVPIIAANMDTVGTFSMASALASFDILTAVHKHYSVEEWQAFINNSSADVLKHVMVSTGTSDADFEKTKQILDLNPALNFVCIDVANGYSEHFVQFVAKAREAWPTKTICAGNVVTGEMCEELILSGADIVKVGIGPGSVCTTRVKTGVGYPQLSAVIECADAAHGLGGMIVSDGGCTTPGDVAKAFGGGADFVMLGGMLAGHEESGGRIVEENGEKFMLFYGMSSESAMKRHVGGVAEYRAAEGKTVKLPLRGPVENTARDILGGLRSACTYVGASRLKELTKRTTFIRVQEQENRIFNNL</sequence>
<keyword id="KW-0479">Metal-binding</keyword>
<keyword id="KW-0521">NADP</keyword>
<keyword id="KW-0560">Oxidoreductase</keyword>
<keyword id="KW-0630">Potassium</keyword>
<evidence type="ECO:0000255" key="1">
    <source>
        <dbReference type="HAMAP-Rule" id="MF_00596"/>
    </source>
</evidence>